<organism>
    <name type="scientific">Bacillus subtilis (strain 168)</name>
    <dbReference type="NCBI Taxonomy" id="224308"/>
    <lineage>
        <taxon>Bacteria</taxon>
        <taxon>Bacillati</taxon>
        <taxon>Bacillota</taxon>
        <taxon>Bacilli</taxon>
        <taxon>Bacillales</taxon>
        <taxon>Bacillaceae</taxon>
        <taxon>Bacillus</taxon>
    </lineage>
</organism>
<feature type="chain" id="PRO_0000074776" description="Sporulation kinase A">
    <location>
        <begin position="1"/>
        <end position="606"/>
    </location>
</feature>
<feature type="domain" description="PAS 1" evidence="2">
    <location>
        <begin position="3"/>
        <end position="73"/>
    </location>
</feature>
<feature type="domain" description="PAC 1">
    <location>
        <begin position="77"/>
        <end position="116"/>
    </location>
</feature>
<feature type="domain" description="PAS 2" evidence="2">
    <location>
        <begin position="140"/>
        <end position="214"/>
    </location>
</feature>
<feature type="domain" description="PAC 2">
    <location>
        <begin position="218"/>
        <end position="255"/>
    </location>
</feature>
<feature type="domain" description="PAS 3" evidence="2">
    <location>
        <begin position="265"/>
        <end position="335"/>
    </location>
</feature>
<feature type="domain" description="Histidine kinase" evidence="1">
    <location>
        <begin position="402"/>
        <end position="606"/>
    </location>
</feature>
<feature type="modified residue" description="Phosphohistidine; by autocatalysis" evidence="1">
    <location>
        <position position="405"/>
    </location>
</feature>
<feature type="sequence conflict" description="In Ref. 1; AAA22800." evidence="3" ref="1">
    <original>S</original>
    <variation>F</variation>
    <location>
        <position position="276"/>
    </location>
</feature>
<feature type="strand" evidence="4">
    <location>
        <begin position="17"/>
        <end position="21"/>
    </location>
</feature>
<feature type="strand" evidence="4">
    <location>
        <begin position="25"/>
        <end position="30"/>
    </location>
</feature>
<feature type="helix" evidence="4">
    <location>
        <begin position="34"/>
        <end position="38"/>
    </location>
</feature>
<feature type="helix" evidence="4">
    <location>
        <begin position="42"/>
        <end position="45"/>
    </location>
</feature>
<feature type="helix" evidence="4">
    <location>
        <begin position="50"/>
        <end position="53"/>
    </location>
</feature>
<feature type="helix" evidence="4">
    <location>
        <begin position="56"/>
        <end position="58"/>
    </location>
</feature>
<feature type="helix" evidence="4">
    <location>
        <begin position="59"/>
        <end position="67"/>
    </location>
</feature>
<feature type="strand" evidence="4">
    <location>
        <begin position="75"/>
        <end position="80"/>
    </location>
</feature>
<feature type="strand" evidence="4">
    <location>
        <begin position="86"/>
        <end position="95"/>
    </location>
</feature>
<feature type="strand" evidence="4">
    <location>
        <begin position="98"/>
        <end position="103"/>
    </location>
</feature>
<feature type="strand" evidence="4">
    <location>
        <begin position="107"/>
        <end position="113"/>
    </location>
</feature>
<name>KINA_BACSU</name>
<comment type="function">
    <text>Phosphorylates the sporulation-regulatory proteins spo0A and spo0F. It also autophosphorylates in the presence of ATP.</text>
</comment>
<comment type="catalytic activity">
    <reaction>
        <text>ATP + protein L-histidine = ADP + protein N-phospho-L-histidine.</text>
        <dbReference type="EC" id="2.7.13.3"/>
    </reaction>
</comment>
<comment type="interaction">
    <interactant intactId="EBI-6405707">
        <id>P16497</id>
    </interactant>
    <interactant intactId="EBI-6405707">
        <id>P16497</id>
        <label>kinA</label>
    </interactant>
    <organismsDiffer>false</organismsDiffer>
    <experiments>8</experiments>
</comment>
<comment type="interaction">
    <interactant intactId="EBI-6405707">
        <id>P16497</id>
    </interactant>
    <interactant intactId="EBI-6405714">
        <id>Q7WY62</id>
        <label>sda</label>
    </interactant>
    <organismsDiffer>false</organismsDiffer>
    <experiments>6</experiments>
</comment>
<comment type="interaction">
    <interactant intactId="EBI-6405707">
        <id>P16497</id>
    </interactant>
    <interactant intactId="EBI-6418009">
        <id>P06628</id>
        <label>spo0F</label>
    </interactant>
    <organismsDiffer>false</organismsDiffer>
    <experiments>3</experiments>
</comment>
<reference key="1">
    <citation type="journal article" date="1990" name="J. Bacteriol.">
        <title>The spoIIJ gene, which regulates early developmental steps in Bacillus subtilis, belongs to a class of environmentally responsive genes.</title>
        <authorList>
            <person name="Antoniewski C."/>
            <person name="Savelli B."/>
            <person name="Stragier P."/>
        </authorList>
    </citation>
    <scope>NUCLEOTIDE SEQUENCE [GENOMIC DNA]</scope>
</reference>
<reference key="2">
    <citation type="journal article" date="1989" name="J. Bacteriol.">
        <title>Characterization of the gene for a protein kinase which phosphorylates the sporulation-regulatory proteins Spo0A and Spo0F of Bacillus subtilis.</title>
        <authorList>
            <person name="Perego M."/>
            <person name="Cole S.P."/>
            <person name="Burbulys D."/>
            <person name="Trach K."/>
            <person name="Hoch J.A."/>
        </authorList>
    </citation>
    <scope>NUCLEOTIDE SEQUENCE [GENOMIC DNA]</scope>
    <source>
        <strain>168</strain>
    </source>
</reference>
<reference key="3">
    <citation type="submission" date="1997-11" db="EMBL/GenBank/DDBJ databases">
        <title>Sequence of the Bacillus subtilis chromosome from ykuA to cse-15.</title>
        <authorList>
            <person name="Scanlan E."/>
            <person name="Devine K.M."/>
        </authorList>
    </citation>
    <scope>NUCLEOTIDE SEQUENCE [GENOMIC DNA]</scope>
    <source>
        <strain>168</strain>
    </source>
</reference>
<reference key="4">
    <citation type="journal article" date="1997" name="Nature">
        <title>The complete genome sequence of the Gram-positive bacterium Bacillus subtilis.</title>
        <authorList>
            <person name="Kunst F."/>
            <person name="Ogasawara N."/>
            <person name="Moszer I."/>
            <person name="Albertini A.M."/>
            <person name="Alloni G."/>
            <person name="Azevedo V."/>
            <person name="Bertero M.G."/>
            <person name="Bessieres P."/>
            <person name="Bolotin A."/>
            <person name="Borchert S."/>
            <person name="Borriss R."/>
            <person name="Boursier L."/>
            <person name="Brans A."/>
            <person name="Braun M."/>
            <person name="Brignell S.C."/>
            <person name="Bron S."/>
            <person name="Brouillet S."/>
            <person name="Bruschi C.V."/>
            <person name="Caldwell B."/>
            <person name="Capuano V."/>
            <person name="Carter N.M."/>
            <person name="Choi S.-K."/>
            <person name="Codani J.-J."/>
            <person name="Connerton I.F."/>
            <person name="Cummings N.J."/>
            <person name="Daniel R.A."/>
            <person name="Denizot F."/>
            <person name="Devine K.M."/>
            <person name="Duesterhoeft A."/>
            <person name="Ehrlich S.D."/>
            <person name="Emmerson P.T."/>
            <person name="Entian K.-D."/>
            <person name="Errington J."/>
            <person name="Fabret C."/>
            <person name="Ferrari E."/>
            <person name="Foulger D."/>
            <person name="Fritz C."/>
            <person name="Fujita M."/>
            <person name="Fujita Y."/>
            <person name="Fuma S."/>
            <person name="Galizzi A."/>
            <person name="Galleron N."/>
            <person name="Ghim S.-Y."/>
            <person name="Glaser P."/>
            <person name="Goffeau A."/>
            <person name="Golightly E.J."/>
            <person name="Grandi G."/>
            <person name="Guiseppi G."/>
            <person name="Guy B.J."/>
            <person name="Haga K."/>
            <person name="Haiech J."/>
            <person name="Harwood C.R."/>
            <person name="Henaut A."/>
            <person name="Hilbert H."/>
            <person name="Holsappel S."/>
            <person name="Hosono S."/>
            <person name="Hullo M.-F."/>
            <person name="Itaya M."/>
            <person name="Jones L.-M."/>
            <person name="Joris B."/>
            <person name="Karamata D."/>
            <person name="Kasahara Y."/>
            <person name="Klaerr-Blanchard M."/>
            <person name="Klein C."/>
            <person name="Kobayashi Y."/>
            <person name="Koetter P."/>
            <person name="Koningstein G."/>
            <person name="Krogh S."/>
            <person name="Kumano M."/>
            <person name="Kurita K."/>
            <person name="Lapidus A."/>
            <person name="Lardinois S."/>
            <person name="Lauber J."/>
            <person name="Lazarevic V."/>
            <person name="Lee S.-M."/>
            <person name="Levine A."/>
            <person name="Liu H."/>
            <person name="Masuda S."/>
            <person name="Mauel C."/>
            <person name="Medigue C."/>
            <person name="Medina N."/>
            <person name="Mellado R.P."/>
            <person name="Mizuno M."/>
            <person name="Moestl D."/>
            <person name="Nakai S."/>
            <person name="Noback M."/>
            <person name="Noone D."/>
            <person name="O'Reilly M."/>
            <person name="Ogawa K."/>
            <person name="Ogiwara A."/>
            <person name="Oudega B."/>
            <person name="Park S.-H."/>
            <person name="Parro V."/>
            <person name="Pohl T.M."/>
            <person name="Portetelle D."/>
            <person name="Porwollik S."/>
            <person name="Prescott A.M."/>
            <person name="Presecan E."/>
            <person name="Pujic P."/>
            <person name="Purnelle B."/>
            <person name="Rapoport G."/>
            <person name="Rey M."/>
            <person name="Reynolds S."/>
            <person name="Rieger M."/>
            <person name="Rivolta C."/>
            <person name="Rocha E."/>
            <person name="Roche B."/>
            <person name="Rose M."/>
            <person name="Sadaie Y."/>
            <person name="Sato T."/>
            <person name="Scanlan E."/>
            <person name="Schleich S."/>
            <person name="Schroeter R."/>
            <person name="Scoffone F."/>
            <person name="Sekiguchi J."/>
            <person name="Sekowska A."/>
            <person name="Seror S.J."/>
            <person name="Serror P."/>
            <person name="Shin B.-S."/>
            <person name="Soldo B."/>
            <person name="Sorokin A."/>
            <person name="Tacconi E."/>
            <person name="Takagi T."/>
            <person name="Takahashi H."/>
            <person name="Takemaru K."/>
            <person name="Takeuchi M."/>
            <person name="Tamakoshi A."/>
            <person name="Tanaka T."/>
            <person name="Terpstra P."/>
            <person name="Tognoni A."/>
            <person name="Tosato V."/>
            <person name="Uchiyama S."/>
            <person name="Vandenbol M."/>
            <person name="Vannier F."/>
            <person name="Vassarotti A."/>
            <person name="Viari A."/>
            <person name="Wambutt R."/>
            <person name="Wedler E."/>
            <person name="Wedler H."/>
            <person name="Weitzenegger T."/>
            <person name="Winters P."/>
            <person name="Wipat A."/>
            <person name="Yamamoto H."/>
            <person name="Yamane K."/>
            <person name="Yasumoto K."/>
            <person name="Yata K."/>
            <person name="Yoshida K."/>
            <person name="Yoshikawa H.-F."/>
            <person name="Zumstein E."/>
            <person name="Yoshikawa H."/>
            <person name="Danchin A."/>
        </authorList>
    </citation>
    <scope>NUCLEOTIDE SEQUENCE [LARGE SCALE GENOMIC DNA]</scope>
    <source>
        <strain>168</strain>
    </source>
</reference>
<evidence type="ECO:0000255" key="1">
    <source>
        <dbReference type="PROSITE-ProRule" id="PRU00107"/>
    </source>
</evidence>
<evidence type="ECO:0000255" key="2">
    <source>
        <dbReference type="PROSITE-ProRule" id="PRU00140"/>
    </source>
</evidence>
<evidence type="ECO:0000305" key="3"/>
<evidence type="ECO:0007829" key="4">
    <source>
        <dbReference type="PDB" id="2VLG"/>
    </source>
</evidence>
<accession>P16497</accession>
<accession>P22863</accession>
<dbReference type="EC" id="2.7.13.3"/>
<dbReference type="EMBL" id="M29450">
    <property type="protein sequence ID" value="AAA22800.1"/>
    <property type="molecule type" value="Genomic_DNA"/>
</dbReference>
<dbReference type="EMBL" id="M31067">
    <property type="protein sequence ID" value="AAA22664.1"/>
    <property type="molecule type" value="Genomic_DNA"/>
</dbReference>
<dbReference type="EMBL" id="AJ222587">
    <property type="protein sequence ID" value="CAA10862.1"/>
    <property type="molecule type" value="Genomic_DNA"/>
</dbReference>
<dbReference type="EMBL" id="AL009126">
    <property type="protein sequence ID" value="CAB13272.1"/>
    <property type="molecule type" value="Genomic_DNA"/>
</dbReference>
<dbReference type="PIR" id="A33496">
    <property type="entry name" value="A33496"/>
</dbReference>
<dbReference type="RefSeq" id="NP_389282.1">
    <property type="nucleotide sequence ID" value="NC_000964.3"/>
</dbReference>
<dbReference type="RefSeq" id="WP_003245779.1">
    <property type="nucleotide sequence ID" value="NZ_OZ025638.1"/>
</dbReference>
<dbReference type="PDB" id="2VLG">
    <property type="method" value="X-ray"/>
    <property type="resolution" value="1.70 A"/>
    <property type="chains" value="A/B/C/D=10-117"/>
</dbReference>
<dbReference type="PDBsum" id="2VLG"/>
<dbReference type="SASBDB" id="P16497"/>
<dbReference type="SMR" id="P16497"/>
<dbReference type="DIP" id="DIP-58966N"/>
<dbReference type="FunCoup" id="P16497">
    <property type="interactions" value="313"/>
</dbReference>
<dbReference type="IntAct" id="P16497">
    <property type="interactions" value="2"/>
</dbReference>
<dbReference type="STRING" id="224308.BSU13990"/>
<dbReference type="BindingDB" id="P16497"/>
<dbReference type="ChEMBL" id="CHEMBL2111331"/>
<dbReference type="PaxDb" id="224308-BSU13990"/>
<dbReference type="DNASU" id="939230"/>
<dbReference type="EnsemblBacteria" id="CAB13272">
    <property type="protein sequence ID" value="CAB13272"/>
    <property type="gene ID" value="BSU_13990"/>
</dbReference>
<dbReference type="GeneID" id="939230"/>
<dbReference type="KEGG" id="bsu:BSU13990"/>
<dbReference type="PATRIC" id="fig|224308.179.peg.1525"/>
<dbReference type="eggNOG" id="COG4191">
    <property type="taxonomic scope" value="Bacteria"/>
</dbReference>
<dbReference type="InParanoid" id="P16497"/>
<dbReference type="OrthoDB" id="9815750at2"/>
<dbReference type="PhylomeDB" id="P16497"/>
<dbReference type="BioCyc" id="BSUB:BSU13990-MONOMER"/>
<dbReference type="BRENDA" id="2.7.13.3">
    <property type="organism ID" value="658"/>
</dbReference>
<dbReference type="EvolutionaryTrace" id="P16497"/>
<dbReference type="PRO" id="PR:P16497"/>
<dbReference type="Proteomes" id="UP000001570">
    <property type="component" value="Chromosome"/>
</dbReference>
<dbReference type="GO" id="GO:0005524">
    <property type="term" value="F:ATP binding"/>
    <property type="evidence" value="ECO:0007669"/>
    <property type="project" value="UniProtKB-KW"/>
</dbReference>
<dbReference type="GO" id="GO:0042802">
    <property type="term" value="F:identical protein binding"/>
    <property type="evidence" value="ECO:0000353"/>
    <property type="project" value="IntAct"/>
</dbReference>
<dbReference type="GO" id="GO:0000155">
    <property type="term" value="F:phosphorelay sensor kinase activity"/>
    <property type="evidence" value="ECO:0007669"/>
    <property type="project" value="InterPro"/>
</dbReference>
<dbReference type="GO" id="GO:0006355">
    <property type="term" value="P:regulation of DNA-templated transcription"/>
    <property type="evidence" value="ECO:0007669"/>
    <property type="project" value="InterPro"/>
</dbReference>
<dbReference type="GO" id="GO:0030435">
    <property type="term" value="P:sporulation resulting in formation of a cellular spore"/>
    <property type="evidence" value="ECO:0000315"/>
    <property type="project" value="CACAO"/>
</dbReference>
<dbReference type="CDD" id="cd00075">
    <property type="entry name" value="HATPase"/>
    <property type="match status" value="1"/>
</dbReference>
<dbReference type="CDD" id="cd00082">
    <property type="entry name" value="HisKA"/>
    <property type="match status" value="1"/>
</dbReference>
<dbReference type="CDD" id="cd00130">
    <property type="entry name" value="PAS"/>
    <property type="match status" value="3"/>
</dbReference>
<dbReference type="FunFam" id="1.10.287.130:FF:000040">
    <property type="entry name" value="PAS domain-containing sensor histidine kinase"/>
    <property type="match status" value="1"/>
</dbReference>
<dbReference type="FunFam" id="3.30.450.20:FF:000231">
    <property type="entry name" value="PAS domain-containing sensor histidine kinase"/>
    <property type="match status" value="1"/>
</dbReference>
<dbReference type="Gene3D" id="1.10.287.130">
    <property type="match status" value="1"/>
</dbReference>
<dbReference type="Gene3D" id="3.30.565.10">
    <property type="entry name" value="Histidine kinase-like ATPase, C-terminal domain"/>
    <property type="match status" value="1"/>
</dbReference>
<dbReference type="Gene3D" id="3.30.450.20">
    <property type="entry name" value="PAS domain"/>
    <property type="match status" value="3"/>
</dbReference>
<dbReference type="InterPro" id="IPR036890">
    <property type="entry name" value="HATPase_C_sf"/>
</dbReference>
<dbReference type="InterPro" id="IPR005467">
    <property type="entry name" value="His_kinase_dom"/>
</dbReference>
<dbReference type="InterPro" id="IPR003661">
    <property type="entry name" value="HisK_dim/P_dom"/>
</dbReference>
<dbReference type="InterPro" id="IPR036097">
    <property type="entry name" value="HisK_dim/P_sf"/>
</dbReference>
<dbReference type="InterPro" id="IPR001610">
    <property type="entry name" value="PAC"/>
</dbReference>
<dbReference type="InterPro" id="IPR000014">
    <property type="entry name" value="PAS"/>
</dbReference>
<dbReference type="InterPro" id="IPR035965">
    <property type="entry name" value="PAS-like_dom_sf"/>
</dbReference>
<dbReference type="InterPro" id="IPR013767">
    <property type="entry name" value="PAS_fold"/>
</dbReference>
<dbReference type="InterPro" id="IPR013655">
    <property type="entry name" value="PAS_fold_3"/>
</dbReference>
<dbReference type="InterPro" id="IPR004358">
    <property type="entry name" value="Sig_transdc_His_kin-like_C"/>
</dbReference>
<dbReference type="NCBIfam" id="TIGR00229">
    <property type="entry name" value="sensory_box"/>
    <property type="match status" value="3"/>
</dbReference>
<dbReference type="PANTHER" id="PTHR43065">
    <property type="entry name" value="SENSOR HISTIDINE KINASE"/>
    <property type="match status" value="1"/>
</dbReference>
<dbReference type="PANTHER" id="PTHR43065:SF34">
    <property type="entry name" value="SPORULATION KINASE A"/>
    <property type="match status" value="1"/>
</dbReference>
<dbReference type="Pfam" id="PF02518">
    <property type="entry name" value="HATPase_c"/>
    <property type="match status" value="1"/>
</dbReference>
<dbReference type="Pfam" id="PF00512">
    <property type="entry name" value="HisKA"/>
    <property type="match status" value="1"/>
</dbReference>
<dbReference type="Pfam" id="PF00989">
    <property type="entry name" value="PAS"/>
    <property type="match status" value="2"/>
</dbReference>
<dbReference type="Pfam" id="PF08447">
    <property type="entry name" value="PAS_3"/>
    <property type="match status" value="1"/>
</dbReference>
<dbReference type="PRINTS" id="PR00344">
    <property type="entry name" value="BCTRLSENSOR"/>
</dbReference>
<dbReference type="SMART" id="SM00387">
    <property type="entry name" value="HATPase_c"/>
    <property type="match status" value="1"/>
</dbReference>
<dbReference type="SMART" id="SM00388">
    <property type="entry name" value="HisKA"/>
    <property type="match status" value="1"/>
</dbReference>
<dbReference type="SMART" id="SM00086">
    <property type="entry name" value="PAC"/>
    <property type="match status" value="2"/>
</dbReference>
<dbReference type="SMART" id="SM00091">
    <property type="entry name" value="PAS"/>
    <property type="match status" value="3"/>
</dbReference>
<dbReference type="SUPFAM" id="SSF55874">
    <property type="entry name" value="ATPase domain of HSP90 chaperone/DNA topoisomerase II/histidine kinase"/>
    <property type="match status" value="1"/>
</dbReference>
<dbReference type="SUPFAM" id="SSF47384">
    <property type="entry name" value="Homodimeric domain of signal transducing histidine kinase"/>
    <property type="match status" value="1"/>
</dbReference>
<dbReference type="SUPFAM" id="SSF55785">
    <property type="entry name" value="PYP-like sensor domain (PAS domain)"/>
    <property type="match status" value="3"/>
</dbReference>
<dbReference type="PROSITE" id="PS50109">
    <property type="entry name" value="HIS_KIN"/>
    <property type="match status" value="1"/>
</dbReference>
<dbReference type="PROSITE" id="PS50112">
    <property type="entry name" value="PAS"/>
    <property type="match status" value="3"/>
</dbReference>
<keyword id="KW-0002">3D-structure</keyword>
<keyword id="KW-0067">ATP-binding</keyword>
<keyword id="KW-0418">Kinase</keyword>
<keyword id="KW-0547">Nucleotide-binding</keyword>
<keyword id="KW-0597">Phosphoprotein</keyword>
<keyword id="KW-1185">Reference proteome</keyword>
<keyword id="KW-0677">Repeat</keyword>
<keyword id="KW-0749">Sporulation</keyword>
<keyword id="KW-0808">Transferase</keyword>
<keyword id="KW-0902">Two-component regulatory system</keyword>
<proteinExistence type="evidence at protein level"/>
<gene>
    <name type="primary">kinA</name>
    <name type="synonym">gsiC</name>
    <name type="synonym">scoD</name>
    <name type="synonym">spoIIF</name>
    <name type="synonym">spoIIJ</name>
    <name type="ordered locus">BSU13990</name>
</gene>
<sequence length="606" mass="69171">MEQDTQHVKPLQTKTDIHAVLASNGRIIYISANSKLHLGYLQGEMIGSFLKTFLHEEDQFLVESYFYNEHHLMPCTFRFIKKDHTIVWVEAAVEIVTTRAERTEREIILKMKVLEEETGHQSLNCEKHEIEPASPESTTYITDDYERLVENLPSPLCISVKGKIVYVNSAMLSMLGAKSKDAIIGKSSYEFIEEEYHDIVKNRIIRMQKGMEVGMIEQTWKRLDGTPVHLEVKASPTVYKNQQAELLLLIDISSRKKFQTILQKSRERYQLLIQNSIDTIAVIHNGKWVFMNESGISLFEAATYEDLIGKNIYDQLHPCDHEDVKERIQNIAEQKTESEIVKQSWFTFQNRVIYTEMVCIPTTFFGEAAVQVILRDISERKQTEELMLKSEKLSIAGQLAAGIAHEIRNPLTAIKGFLQLMKPTMEGNEHYFDIVFSELSRIELILSELLMLAKPQQNAVKEYLNLKKLIGEVSALLETQANLNGIFIRTSYEKDSIYINGDQNQLKQVFINLIKNAVESMPDGGTVDIIITEDEHSVHVTVKDEGEGIPEKVLNRIGEPFLTTKEKGTGLGLMVTFNIIENHQGVIHVDSHPEKGTAFKISFPKK</sequence>
<protein>
    <recommendedName>
        <fullName>Sporulation kinase A</fullName>
        <ecNumber>2.7.13.3</ecNumber>
    </recommendedName>
    <alternativeName>
        <fullName>Stage II sporulation protein F</fullName>
    </alternativeName>
    <alternativeName>
        <fullName>Stage II sporulation protein J</fullName>
    </alternativeName>
</protein>